<accession>O43505</accession>
<accession>Q4TTN0</accession>
<feature type="chain" id="PRO_0000080555" description="Beta-1,4-glucuronyltransferase 1">
    <location>
        <begin position="1"/>
        <end position="415"/>
    </location>
</feature>
<feature type="topological domain" description="Cytoplasmic" evidence="2">
    <location>
        <begin position="1"/>
        <end position="8"/>
    </location>
</feature>
<feature type="transmembrane region" description="Helical; Signal-anchor for type II membrane protein" evidence="2">
    <location>
        <begin position="9"/>
        <end position="36"/>
    </location>
</feature>
<feature type="topological domain" description="Lumenal" evidence="2">
    <location>
        <begin position="37"/>
        <end position="415"/>
    </location>
</feature>
<feature type="binding site" evidence="13">
    <location>
        <position position="227"/>
    </location>
    <ligand>
        <name>Mn(2+)</name>
        <dbReference type="ChEBI" id="CHEBI:29035"/>
    </ligand>
</feature>
<feature type="binding site" evidence="13">
    <location>
        <position position="229"/>
    </location>
    <ligand>
        <name>Mn(2+)</name>
        <dbReference type="ChEBI" id="CHEBI:29035"/>
    </ligand>
</feature>
<feature type="glycosylation site" description="N-linked (GlcNAc...) asparagine" evidence="2">
    <location>
        <position position="204"/>
    </location>
</feature>
<feature type="glycosylation site" description="N-linked (GlcNAc...) asparagine" evidence="2">
    <location>
        <position position="300"/>
    </location>
</feature>
<feature type="sequence variant" id="VAR_025019" description="In dbSNP:rs35429253." evidence="9">
    <original>T</original>
    <variation>S</variation>
    <location>
        <position position="253"/>
    </location>
</feature>
<feature type="sequence variant" id="VAR_069989" description="In MDDGA13; no effect on Golgi localization; loss of beta-1,4-glucuronyltransferase activity; dbSNP:rs397509397." evidence="4">
    <original>N</original>
    <variation>D</variation>
    <location>
        <position position="390"/>
    </location>
</feature>
<feature type="sequence variant" id="VAR_069990" description="In MDDGA13; no effect on Golgi localization; loss of beta-1,4-glucuronyltransferase activity; dbSNP:rs397509396." evidence="4">
    <original>A</original>
    <variation>V</variation>
    <location>
        <position position="406"/>
    </location>
</feature>
<feature type="mutagenesis site" description="In Mut3; mislocalization to the endoplasmic reticulum." evidence="7">
    <original>M</original>
    <variation>T</variation>
    <location>
        <position position="155"/>
    </location>
</feature>
<feature type="mutagenesis site" description="In Mut2; mislocalization to the endoplasmic reticulum." evidence="7">
    <original>DVD</original>
    <variation>NVN</variation>
    <location>
        <begin position="227"/>
        <end position="229"/>
    </location>
</feature>
<protein>
    <recommendedName>
        <fullName evidence="10 11 15">Beta-1,4-glucuronyltransferase 1</fullName>
        <ecNumber evidence="3 4 6 7">2.4.1.-</ecNumber>
    </recommendedName>
    <alternativeName>
        <fullName>I-beta-1,3-N-acetylglucosaminyltransferase</fullName>
        <shortName>iGnT</shortName>
    </alternativeName>
    <alternativeName>
        <fullName>N-acetyllactosaminide beta-1,3-N-acetylglucosaminyltransferase</fullName>
    </alternativeName>
    <alternativeName>
        <fullName>Poly-N-acetyllactosamine extension enzyme</fullName>
    </alternativeName>
    <alternativeName>
        <fullName>UDP-GlcNAc:betaGal beta-1,3-N-acetylglucosaminyltransferase 1</fullName>
    </alternativeName>
</protein>
<proteinExistence type="evidence at protein level"/>
<reference key="1">
    <citation type="journal article" date="1997" name="Proc. Natl. Acad. Sci. U.S.A.">
        <title>Expression cloning of cDNA encoding a human beta-1,3-N-acetylglucosaminyltransferase that is essential for poly-N-acetyllactosamine synthesis.</title>
        <authorList>
            <person name="Sasaki K."/>
            <person name="Kurata-Miura K."/>
            <person name="Ujita M."/>
            <person name="Angata K."/>
            <person name="Nakagawa S."/>
            <person name="Sekine S."/>
            <person name="Nishi T."/>
            <person name="Fukuda M."/>
        </authorList>
    </citation>
    <scope>NUCLEOTIDE SEQUENCE [MRNA]</scope>
    <scope>TISSUE SPECIFICITY</scope>
    <scope>CAUTION</scope>
</reference>
<reference key="2">
    <citation type="submission" date="2005-05" db="EMBL/GenBank/DDBJ databases">
        <authorList>
            <consortium name="SeattleSNPs variation discovery resource"/>
        </authorList>
    </citation>
    <scope>NUCLEOTIDE SEQUENCE [GENOMIC DNA]</scope>
    <scope>VARIANT SER-253</scope>
</reference>
<reference key="3">
    <citation type="journal article" date="2004" name="Genome Res.">
        <title>The status, quality, and expansion of the NIH full-length cDNA project: the Mammalian Gene Collection (MGC).</title>
        <authorList>
            <consortium name="The MGC Project Team"/>
        </authorList>
    </citation>
    <scope>NUCLEOTIDE SEQUENCE [LARGE SCALE MRNA]</scope>
    <source>
        <tissue>Colon</tissue>
    </source>
</reference>
<reference key="4">
    <citation type="journal article" date="2009" name="Proc. Natl. Acad. Sci. U.S.A.">
        <title>Tumor suppressor function of laminin-binding alpha-dystroglycan requires a distinct beta3-N-acetylglucosaminyltransferase.</title>
        <authorList>
            <person name="Bao X."/>
            <person name="Kobayashi M."/>
            <person name="Hatakeyama S."/>
            <person name="Angata K."/>
            <person name="Gullberg D."/>
            <person name="Nakayama J."/>
            <person name="Fukuda M.N."/>
            <person name="Fukuda M."/>
        </authorList>
    </citation>
    <scope>FUNCTION</scope>
    <scope>SUBCELLULAR LOCATION</scope>
    <scope>INTERACTION WITH LARGE1 AND LARGE2</scope>
    <scope>CATALYTIC ACTIVITY</scope>
</reference>
<reference key="5">
    <citation type="journal article" date="2013" name="Hum. Mol. Genet.">
        <title>Missense mutations in beta-1,3-N-acetylglucosaminyltransferase 1 (B3GNT1) cause Walker-Warburg syndrome.</title>
        <authorList>
            <person name="Buysse K."/>
            <person name="Riemersma M."/>
            <person name="Powell G."/>
            <person name="van Reeuwijk J."/>
            <person name="Chitayat D."/>
            <person name="Roscioli T."/>
            <person name="Kamsteeg E.J."/>
            <person name="van den Elzen C."/>
            <person name="van Beusekom E."/>
            <person name="Blaser S."/>
            <person name="Babul-Hirji R."/>
            <person name="Halliday W."/>
            <person name="Wright G.J."/>
            <person name="Stemple D.L."/>
            <person name="Lin Y.Y."/>
            <person name="Lefeber D.J."/>
            <person name="van Bokhoven H."/>
        </authorList>
    </citation>
    <scope>FUNCTION</scope>
    <scope>SUBCELLULAR LOCATION</scope>
    <scope>VARIANTS MDDGA13 ASP-390 AND VAL-406</scope>
    <scope>CATALYTIC ACTIVITY</scope>
    <scope>CHARACTERIZATION OF VARIANTS MDDGA13 ASP-390 AND VAL-406</scope>
</reference>
<reference key="6">
    <citation type="journal article" date="2013" name="Neurogenetics">
        <title>A truncating mutation in B3GNT1 causes severe Walker-Warburg syndrome.</title>
        <authorList>
            <person name="Shaheen R."/>
            <person name="Faqeih E."/>
            <person name="Ansari S."/>
            <person name="Alkuraya F.S."/>
        </authorList>
    </citation>
    <scope>INVOLVEMENT IN MDDGA13</scope>
</reference>
<reference key="7">
    <citation type="journal article" date="2014" name="Elife">
        <title>The glucuronyltransferase B4GAT1 is required for initiation of LARGE-mediated alpha-dystroglycan functional glycosylation.</title>
        <authorList>
            <person name="Willer T."/>
            <person name="Inamori K.I."/>
            <person name="Venzke D."/>
            <person name="Harvey C."/>
            <person name="Morgensen G."/>
            <person name="Hara Y."/>
            <person name="Beltran Valero de Bernabe D."/>
            <person name="Yu L."/>
            <person name="Wright K.M."/>
            <person name="Campbell K.P."/>
        </authorList>
    </citation>
    <scope>FUNCTION</scope>
    <scope>CATALYTIC ACTIVITY</scope>
    <scope>SUBCELLULAR LOCATION</scope>
    <scope>PATHWAY</scope>
    <scope>COFACTOR</scope>
    <scope>BIOPHYSICOCHEMICAL PROPERTIES</scope>
    <scope>MUTAGENESIS OF MET-155 AND 227-ASP--ASP-229</scope>
</reference>
<reference key="8">
    <citation type="journal article" date="2014" name="Elife">
        <title>B4GAT1 is the priming enzyme for the LARGE-dependent functional glycosylation of alpha-dystroglycan.</title>
        <authorList>
            <person name="Praissman J.L."/>
            <person name="Live D.H."/>
            <person name="Wang S."/>
            <person name="Ramiah A."/>
            <person name="Chinoy Z.S."/>
            <person name="Boons G.J."/>
            <person name="Moremen K.W."/>
            <person name="Wells L."/>
        </authorList>
    </citation>
    <scope>FUNCTION</scope>
    <scope>CATALYTIC ACTIVITY</scope>
    <scope>PATHWAY</scope>
</reference>
<sequence>MQMSYAIRCAFYQLLLAALMLVAMLQLLYLSLLSGLHGQEEQDQYFEFFPPSPRSVDQVKAQLRTALASGGVLDASGDYRVYRGLLKTTMDPNDVILATHASVDNLLHLSGLLERWEGPLSVSVFAATKEEAQLATVLAYALSSHCPDMRARVAMHLVCPSRYEAAVPDPREPGEFALLRSCQEVFDKLARVAQPGINYALGTNVSYPNNLLRNLAREGANYALVIDVDMVPSEGLWRGLREMLDQSNQWGGTALVVPAFEIRRARRMPMNKNELVQLYQVGEVRPFYYGLCTPCQAPTNYSRWVNLPEESLLRPAYVVPWQDPWEPFYVAGGKVPTFDERFRQYGFNRISQACELHVAGFDFEVLNEGFLVHKGFKEALKFHPQKEAENQHNKILYRQFKQELKAKYPNSPRRC</sequence>
<dbReference type="EC" id="2.4.1.-" evidence="3 4 6 7"/>
<dbReference type="EMBL" id="AF029893">
    <property type="protein sequence ID" value="AAC39538.1"/>
    <property type="molecule type" value="mRNA"/>
</dbReference>
<dbReference type="EMBL" id="DQ066422">
    <property type="protein sequence ID" value="AAY46155.1"/>
    <property type="molecule type" value="Genomic_DNA"/>
</dbReference>
<dbReference type="EMBL" id="BC021965">
    <property type="protein sequence ID" value="AAH21965.1"/>
    <property type="molecule type" value="mRNA"/>
</dbReference>
<dbReference type="CCDS" id="CCDS8136.1"/>
<dbReference type="RefSeq" id="NP_006867.1">
    <property type="nucleotide sequence ID" value="NM_006876.3"/>
</dbReference>
<dbReference type="SMR" id="O43505"/>
<dbReference type="BioGRID" id="116229">
    <property type="interactions" value="130"/>
</dbReference>
<dbReference type="DIP" id="DIP-48921N"/>
<dbReference type="FunCoup" id="O43505">
    <property type="interactions" value="330"/>
</dbReference>
<dbReference type="IntAct" id="O43505">
    <property type="interactions" value="102"/>
</dbReference>
<dbReference type="MINT" id="O43505"/>
<dbReference type="STRING" id="9606.ENSP00000309096"/>
<dbReference type="CAZy" id="GT49">
    <property type="family name" value="Glycosyltransferase Family 49"/>
</dbReference>
<dbReference type="GlyConnect" id="1033">
    <property type="glycosylation" value="1 N-Linked glycan (1 site)"/>
</dbReference>
<dbReference type="GlyCosmos" id="O43505">
    <property type="glycosylation" value="2 sites, 1 glycan"/>
</dbReference>
<dbReference type="GlyGen" id="O43505">
    <property type="glycosylation" value="3 sites, 3 N-linked glycans (2 sites), 1 O-linked glycan (1 site)"/>
</dbReference>
<dbReference type="iPTMnet" id="O43505"/>
<dbReference type="PhosphoSitePlus" id="O43505"/>
<dbReference type="SwissPalm" id="O43505"/>
<dbReference type="BioMuta" id="B4GAT1"/>
<dbReference type="jPOST" id="O43505"/>
<dbReference type="MassIVE" id="O43505"/>
<dbReference type="PaxDb" id="9606-ENSP00000309096"/>
<dbReference type="PeptideAtlas" id="O43505"/>
<dbReference type="ProteomicsDB" id="48998"/>
<dbReference type="Pumba" id="O43505"/>
<dbReference type="Antibodypedia" id="2208">
    <property type="antibodies" value="131 antibodies from 22 providers"/>
</dbReference>
<dbReference type="DNASU" id="11041"/>
<dbReference type="Ensembl" id="ENST00000311181.5">
    <property type="protein sequence ID" value="ENSP00000309096.4"/>
    <property type="gene ID" value="ENSG00000174684.7"/>
</dbReference>
<dbReference type="GeneID" id="11041"/>
<dbReference type="KEGG" id="hsa:11041"/>
<dbReference type="MANE-Select" id="ENST00000311181.5">
    <property type="protein sequence ID" value="ENSP00000309096.4"/>
    <property type="RefSeq nucleotide sequence ID" value="NM_006876.3"/>
    <property type="RefSeq protein sequence ID" value="NP_006867.1"/>
</dbReference>
<dbReference type="UCSC" id="uc001ohr.4">
    <property type="organism name" value="human"/>
</dbReference>
<dbReference type="AGR" id="HGNC:15685"/>
<dbReference type="CTD" id="11041"/>
<dbReference type="DisGeNET" id="11041"/>
<dbReference type="GeneCards" id="B4GAT1"/>
<dbReference type="HGNC" id="HGNC:15685">
    <property type="gene designation" value="B4GAT1"/>
</dbReference>
<dbReference type="HPA" id="ENSG00000174684">
    <property type="expression patterns" value="Tissue enhanced (brain)"/>
</dbReference>
<dbReference type="MalaCards" id="B4GAT1"/>
<dbReference type="MIM" id="605517">
    <property type="type" value="gene"/>
</dbReference>
<dbReference type="MIM" id="615287">
    <property type="type" value="phenotype"/>
</dbReference>
<dbReference type="neXtProt" id="NX_O43505"/>
<dbReference type="OpenTargets" id="ENSG00000174684"/>
<dbReference type="Orphanet" id="899">
    <property type="disease" value="Walker-Warburg syndrome"/>
</dbReference>
<dbReference type="PharmGKB" id="PA164741279"/>
<dbReference type="VEuPathDB" id="HostDB:ENSG00000174684"/>
<dbReference type="eggNOG" id="KOG3765">
    <property type="taxonomic scope" value="Eukaryota"/>
</dbReference>
<dbReference type="GeneTree" id="ENSGT00940000157679"/>
<dbReference type="HOGENOM" id="CLU_019238_5_0_1"/>
<dbReference type="InParanoid" id="O43505"/>
<dbReference type="OMA" id="SGQYRIY"/>
<dbReference type="OrthoDB" id="9974378at2759"/>
<dbReference type="PAN-GO" id="O43505">
    <property type="GO annotations" value="3 GO annotations based on evolutionary models"/>
</dbReference>
<dbReference type="PhylomeDB" id="O43505"/>
<dbReference type="TreeFam" id="TF319168"/>
<dbReference type="BioCyc" id="MetaCyc:HS10821-MONOMER"/>
<dbReference type="BRENDA" id="2.4.1.149">
    <property type="organism ID" value="2681"/>
</dbReference>
<dbReference type="PathwayCommons" id="O43505"/>
<dbReference type="Reactome" id="R-HSA-2022854">
    <property type="pathway name" value="Keratan sulfate biosynthesis"/>
</dbReference>
<dbReference type="Reactome" id="R-HSA-5083627">
    <property type="pathway name" value="Defective LARGE causes MDDGA6 and MDDGB6"/>
</dbReference>
<dbReference type="Reactome" id="R-HSA-5173105">
    <property type="pathway name" value="O-linked glycosylation"/>
</dbReference>
<dbReference type="SignaLink" id="O43505"/>
<dbReference type="UniPathway" id="UPA00378"/>
<dbReference type="BioGRID-ORCS" id="11041">
    <property type="hits" value="7 hits in 1143 CRISPR screens"/>
</dbReference>
<dbReference type="ChiTaRS" id="B4GAT1">
    <property type="organism name" value="human"/>
</dbReference>
<dbReference type="GeneWiki" id="B3GNT1"/>
<dbReference type="GenomeRNAi" id="11041"/>
<dbReference type="Pharos" id="O43505">
    <property type="development level" value="Tbio"/>
</dbReference>
<dbReference type="PRO" id="PR:O43505"/>
<dbReference type="Proteomes" id="UP000005640">
    <property type="component" value="Chromosome 11"/>
</dbReference>
<dbReference type="RNAct" id="O43505">
    <property type="molecule type" value="protein"/>
</dbReference>
<dbReference type="Bgee" id="ENSG00000174684">
    <property type="expression patterns" value="Expressed in endothelial cell and 207 other cell types or tissues"/>
</dbReference>
<dbReference type="ExpressionAtlas" id="O43505">
    <property type="expression patterns" value="baseline and differential"/>
</dbReference>
<dbReference type="GO" id="GO:0070062">
    <property type="term" value="C:extracellular exosome"/>
    <property type="evidence" value="ECO:0007005"/>
    <property type="project" value="UniProtKB"/>
</dbReference>
<dbReference type="GO" id="GO:0005794">
    <property type="term" value="C:Golgi apparatus"/>
    <property type="evidence" value="ECO:0000314"/>
    <property type="project" value="UniProtKB"/>
</dbReference>
<dbReference type="GO" id="GO:0000139">
    <property type="term" value="C:Golgi membrane"/>
    <property type="evidence" value="ECO:0000304"/>
    <property type="project" value="Reactome"/>
</dbReference>
<dbReference type="GO" id="GO:0015020">
    <property type="term" value="F:glucuronosyltransferase activity"/>
    <property type="evidence" value="ECO:0000314"/>
    <property type="project" value="UniProtKB"/>
</dbReference>
<dbReference type="GO" id="GO:0046872">
    <property type="term" value="F:metal ion binding"/>
    <property type="evidence" value="ECO:0007669"/>
    <property type="project" value="UniProtKB-KW"/>
</dbReference>
<dbReference type="GO" id="GO:0008532">
    <property type="term" value="F:N-acetyllactosaminide beta-1,3-N-acetylglucosaminyltransferase activity"/>
    <property type="evidence" value="ECO:0000304"/>
    <property type="project" value="Reactome"/>
</dbReference>
<dbReference type="GO" id="GO:0007411">
    <property type="term" value="P:axon guidance"/>
    <property type="evidence" value="ECO:0007669"/>
    <property type="project" value="Ensembl"/>
</dbReference>
<dbReference type="GO" id="GO:0018146">
    <property type="term" value="P:keratan sulfate proteoglycan biosynthetic process"/>
    <property type="evidence" value="ECO:0000304"/>
    <property type="project" value="Reactome"/>
</dbReference>
<dbReference type="GO" id="GO:0035269">
    <property type="term" value="P:protein O-linked mannosylation"/>
    <property type="evidence" value="ECO:0000314"/>
    <property type="project" value="UniProtKB"/>
</dbReference>
<dbReference type="InterPro" id="IPR043189">
    <property type="entry name" value="B4GAT1"/>
</dbReference>
<dbReference type="PANTHER" id="PTHR46420">
    <property type="entry name" value="BETA-1,4-GLUCURONYLTRANSFERASE 1"/>
    <property type="match status" value="1"/>
</dbReference>
<dbReference type="PANTHER" id="PTHR46420:SF1">
    <property type="entry name" value="BETA-1,4-GLUCURONYLTRANSFERASE 1"/>
    <property type="match status" value="1"/>
</dbReference>
<dbReference type="Pfam" id="PF13896">
    <property type="entry name" value="Glyco_transf_49"/>
    <property type="match status" value="1"/>
</dbReference>
<gene>
    <name evidence="10 11 15" type="primary">B4GAT1</name>
    <name evidence="15" type="synonym">B3GNT1</name>
    <name type="synonym">B3GNT6</name>
</gene>
<comment type="function">
    <text evidence="1 3 4 6 7">Beta-1,4-glucuronyltransferase involved in O-mannosylation of alpha-dystroglycan (DAG1) (PubMed:19587235, PubMed:23359570, PubMed:25279697, PubMed:25279699). Transfers a glucuronic acid (GlcA) residue onto a xylose (Xyl) acceptor to produce the glucuronyl-beta-1,4-xylose-beta disaccharide primer, which is further elongated by LARGE1, during synthesis of phosphorylated O-mannosyl glycan (PubMed:25279697, PubMed:25279699). Phosphorylated O-mannosyl glycan is a carbohydrate structure present in alpha-dystroglycan (DAG1), which is required for binding laminin G-like domain-containing extracellular proteins with high affinity (PubMed:25279697, PubMed:25279699). Required for axon guidance; via its function in O-mannosylation of alpha-dystroglycan (DAG1) (By similarity).</text>
</comment>
<comment type="catalytic activity">
    <reaction evidence="3 4 6 7">
        <text>3-O-[beta-D-Xyl-(1-&gt;4)-Rib-ol-P-Rib-ol-P-3-beta-D-GalNAc-(1-&gt;3)-beta-D-GlcNAc-(1-&gt;4)-(O-6-P-alpha-D-Man)]-Thr-[protein] + UDP-alpha-D-glucuronate = 3-O-[beta-D-GlcA-(1-&gt;3)-beta-D-Xyl-(1-&gt;4)-Rib-ol-P-Rib-ol-P-3-beta-D-GalNAc-(1-&gt;3)-beta-D-GlcNAc-(1-&gt;4)-(O-6-P-alpha-D-Man)]-Thr-[protein] + UDP + H(+)</text>
        <dbReference type="Rhea" id="RHEA:46860"/>
        <dbReference type="Rhea" id="RHEA-COMP:15023"/>
        <dbReference type="Rhea" id="RHEA-COMP:17482"/>
        <dbReference type="ChEBI" id="CHEBI:15378"/>
        <dbReference type="ChEBI" id="CHEBI:58052"/>
        <dbReference type="ChEBI" id="CHEBI:58223"/>
        <dbReference type="ChEBI" id="CHEBI:142405"/>
        <dbReference type="ChEBI" id="CHEBI:177336"/>
    </reaction>
</comment>
<comment type="cofactor">
    <cofactor evidence="7">
        <name>Mn(2+)</name>
        <dbReference type="ChEBI" id="CHEBI:29035"/>
    </cofactor>
</comment>
<comment type="biophysicochemical properties">
    <phDependence>
        <text evidence="7">Optimum pH is 7.0.</text>
    </phDependence>
</comment>
<comment type="pathway">
    <text evidence="6 7 8">Protein modification; protein glycosylation.</text>
</comment>
<comment type="subunit">
    <text evidence="3">Interacts with LARGE1 and LARGE2.</text>
</comment>
<comment type="interaction">
    <interactant intactId="EBI-6138697">
        <id>O43505</id>
    </interactant>
    <interactant intactId="EBI-15792998">
        <id>O95461-1</id>
        <label>LARGE1</label>
    </interactant>
    <organismsDiffer>false</organismsDiffer>
    <experiments>2</experiments>
</comment>
<comment type="interaction">
    <interactant intactId="EBI-6138697">
        <id>O43505</id>
    </interactant>
    <interactant intactId="EBI-2839174">
        <id>Q8N3Y3</id>
        <label>LARGE2</label>
    </interactant>
    <organismsDiffer>false</organismsDiffer>
    <experiments>3</experiments>
</comment>
<comment type="subcellular location">
    <subcellularLocation>
        <location evidence="3 4 7">Golgi apparatus membrane</location>
        <topology evidence="4">Single-pass type II membrane protein</topology>
    </subcellularLocation>
    <text evidence="7">Localizes near the trans-Golgi apparatus.</text>
</comment>
<comment type="tissue specificity">
    <text evidence="8">In the adult, highly expressed in heart, brain, skeletal muscle and kidney and to a lesser extent in placenta, pancreas, spleen, prostate, testis, ovary, small intestine and colon. Very weak expression in lung, liver, thymus and peripheral blood leukocytes. In fetal highly expressed in brain and kidney and to a lesser extent in lung and liver.</text>
</comment>
<comment type="disease" evidence="4 5">
    <disease id="DI-03785">
        <name>Muscular dystrophy-dystroglycanopathy congenital with brain and eye anomalies A13</name>
        <acronym>MDDGA13</acronym>
        <description>An autosomal recessive disorder characterized by congenital muscular dystrophy associated with cobblestone lissencephaly and other brain anomalies, eye malformations, profound intellectual disability, and death usually in the first years of life. Included diseases are the more severe Walker-Warburg syndrome and the slightly less severe muscle-eye-brain disease.</description>
        <dbReference type="MIM" id="615287"/>
    </disease>
    <text>The disease is caused by variants affecting the gene represented in this entry.</text>
</comment>
<comment type="similarity">
    <text evidence="12">Belongs to the glycosyltransferase 49 family.</text>
</comment>
<comment type="caution">
    <text evidence="6 7 14">Was initially characterized as a beta-1,3-N-acetylglucosaminyltransferase involved in the synthesis of poly-N-acetyllactosamine, able to initiate the synthesis or the elongation of the linear poly-N-acetyllactosaminoglycans (PubMed:9405606). However, it was later shown that it acts as a beta-1,4-glucuronyltransferase (PubMed:25279697, PubMed:25279699).</text>
</comment>
<comment type="online information" name="Functional Glycomics Gateway - GTase">
    <link uri="http://www.functionalglycomics.org/glycomics/molecule/jsp/glycoEnzyme/viewGlycoEnzyme.jsp?gbpId=gt_hum_547"/>
    <text>N-acetyllactosaminide beta-1,3-N-acetylglucosaminyltransferase</text>
</comment>
<evidence type="ECO:0000250" key="1">
    <source>
        <dbReference type="UniProtKB" id="Q8BWP8"/>
    </source>
</evidence>
<evidence type="ECO:0000255" key="2"/>
<evidence type="ECO:0000269" key="3">
    <source>
    </source>
</evidence>
<evidence type="ECO:0000269" key="4">
    <source>
    </source>
</evidence>
<evidence type="ECO:0000269" key="5">
    <source>
    </source>
</evidence>
<evidence type="ECO:0000269" key="6">
    <source>
    </source>
</evidence>
<evidence type="ECO:0000269" key="7">
    <source>
    </source>
</evidence>
<evidence type="ECO:0000269" key="8">
    <source>
    </source>
</evidence>
<evidence type="ECO:0000269" key="9">
    <source ref="2"/>
</evidence>
<evidence type="ECO:0000303" key="10">
    <source>
    </source>
</evidence>
<evidence type="ECO:0000303" key="11">
    <source>
    </source>
</evidence>
<evidence type="ECO:0000305" key="12"/>
<evidence type="ECO:0000305" key="13">
    <source>
    </source>
</evidence>
<evidence type="ECO:0000305" key="14">
    <source>
    </source>
</evidence>
<evidence type="ECO:0000312" key="15">
    <source>
        <dbReference type="HGNC" id="HGNC:15685"/>
    </source>
</evidence>
<name>B4GA1_HUMAN</name>
<keyword id="KW-0912">Congenital muscular dystrophy</keyword>
<keyword id="KW-0225">Disease variant</keyword>
<keyword id="KW-1215">Dystroglycanopathy</keyword>
<keyword id="KW-0325">Glycoprotein</keyword>
<keyword id="KW-0328">Glycosyltransferase</keyword>
<keyword id="KW-0333">Golgi apparatus</keyword>
<keyword id="KW-0451">Lissencephaly</keyword>
<keyword id="KW-0464">Manganese</keyword>
<keyword id="KW-0472">Membrane</keyword>
<keyword id="KW-0479">Metal-binding</keyword>
<keyword id="KW-1267">Proteomics identification</keyword>
<keyword id="KW-1185">Reference proteome</keyword>
<keyword id="KW-0735">Signal-anchor</keyword>
<keyword id="KW-0808">Transferase</keyword>
<keyword id="KW-0812">Transmembrane</keyword>
<keyword id="KW-1133">Transmembrane helix</keyword>
<organism>
    <name type="scientific">Homo sapiens</name>
    <name type="common">Human</name>
    <dbReference type="NCBI Taxonomy" id="9606"/>
    <lineage>
        <taxon>Eukaryota</taxon>
        <taxon>Metazoa</taxon>
        <taxon>Chordata</taxon>
        <taxon>Craniata</taxon>
        <taxon>Vertebrata</taxon>
        <taxon>Euteleostomi</taxon>
        <taxon>Mammalia</taxon>
        <taxon>Eutheria</taxon>
        <taxon>Euarchontoglires</taxon>
        <taxon>Primates</taxon>
        <taxon>Haplorrhini</taxon>
        <taxon>Catarrhini</taxon>
        <taxon>Hominidae</taxon>
        <taxon>Homo</taxon>
    </lineage>
</organism>